<comment type="function">
    <text evidence="3">Binds single-stranded telomeric sequences of the type (TG[1-3])n in vitro. Has a role in meiosis.</text>
</comment>
<comment type="subcellular location">
    <subcellularLocation>
        <location evidence="4">Cytoplasm</location>
    </subcellularLocation>
    <subcellularLocation>
        <location evidence="4">Nucleus</location>
    </subcellularLocation>
    <subcellularLocation>
        <location evidence="4">Chromosome</location>
        <location evidence="4">Telomere</location>
    </subcellularLocation>
</comment>
<keyword id="KW-0158">Chromosome</keyword>
<keyword id="KW-0963">Cytoplasm</keyword>
<keyword id="KW-0238">DNA-binding</keyword>
<keyword id="KW-0469">Meiosis</keyword>
<keyword id="KW-0539">Nucleus</keyword>
<keyword id="KW-0597">Phosphoprotein</keyword>
<keyword id="KW-1185">Reference proteome</keyword>
<keyword id="KW-0677">Repeat</keyword>
<keyword id="KW-0694">RNA-binding</keyword>
<keyword id="KW-0779">Telomere</keyword>
<protein>
    <recommendedName>
        <fullName>Single-stranded TG1-3 DNA-binding protein</fullName>
    </recommendedName>
    <alternativeName>
        <fullName>Meiotically up-regulated gene 187 protein</fullName>
    </alternativeName>
</protein>
<name>TCG1_SCHPO</name>
<accession>Q9HEQ9</accession>
<accession>O94430</accession>
<reference key="1">
    <citation type="journal article" date="2003" name="J. Biol. Chem.">
        <title>Exposure of single-stranded telomeric DNA causes G2/M cell cycle arrest in Saccharomyces cerevisiae.</title>
        <authorList>
            <person name="Pang T.-L."/>
            <person name="Wang C.-Y."/>
            <person name="Hsu C.-L."/>
            <person name="Chen M.-Y."/>
            <person name="Lin J.-J."/>
        </authorList>
    </citation>
    <scope>NUCLEOTIDE SEQUENCE [MRNA]</scope>
    <scope>DNA-BINDING</scope>
</reference>
<reference key="2">
    <citation type="journal article" date="2002" name="Nature">
        <title>The genome sequence of Schizosaccharomyces pombe.</title>
        <authorList>
            <person name="Wood V."/>
            <person name="Gwilliam R."/>
            <person name="Rajandream M.A."/>
            <person name="Lyne M.H."/>
            <person name="Lyne R."/>
            <person name="Stewart A."/>
            <person name="Sgouros J.G."/>
            <person name="Peat N."/>
            <person name="Hayles J."/>
            <person name="Baker S.G."/>
            <person name="Basham D."/>
            <person name="Bowman S."/>
            <person name="Brooks K."/>
            <person name="Brown D."/>
            <person name="Brown S."/>
            <person name="Chillingworth T."/>
            <person name="Churcher C.M."/>
            <person name="Collins M."/>
            <person name="Connor R."/>
            <person name="Cronin A."/>
            <person name="Davis P."/>
            <person name="Feltwell T."/>
            <person name="Fraser A."/>
            <person name="Gentles S."/>
            <person name="Goble A."/>
            <person name="Hamlin N."/>
            <person name="Harris D.E."/>
            <person name="Hidalgo J."/>
            <person name="Hodgson G."/>
            <person name="Holroyd S."/>
            <person name="Hornsby T."/>
            <person name="Howarth S."/>
            <person name="Huckle E.J."/>
            <person name="Hunt S."/>
            <person name="Jagels K."/>
            <person name="James K.D."/>
            <person name="Jones L."/>
            <person name="Jones M."/>
            <person name="Leather S."/>
            <person name="McDonald S."/>
            <person name="McLean J."/>
            <person name="Mooney P."/>
            <person name="Moule S."/>
            <person name="Mungall K.L."/>
            <person name="Murphy L.D."/>
            <person name="Niblett D."/>
            <person name="Odell C."/>
            <person name="Oliver K."/>
            <person name="O'Neil S."/>
            <person name="Pearson D."/>
            <person name="Quail M.A."/>
            <person name="Rabbinowitsch E."/>
            <person name="Rutherford K.M."/>
            <person name="Rutter S."/>
            <person name="Saunders D."/>
            <person name="Seeger K."/>
            <person name="Sharp S."/>
            <person name="Skelton J."/>
            <person name="Simmonds M.N."/>
            <person name="Squares R."/>
            <person name="Squares S."/>
            <person name="Stevens K."/>
            <person name="Taylor K."/>
            <person name="Taylor R.G."/>
            <person name="Tivey A."/>
            <person name="Walsh S.V."/>
            <person name="Warren T."/>
            <person name="Whitehead S."/>
            <person name="Woodward J.R."/>
            <person name="Volckaert G."/>
            <person name="Aert R."/>
            <person name="Robben J."/>
            <person name="Grymonprez B."/>
            <person name="Weltjens I."/>
            <person name="Vanstreels E."/>
            <person name="Rieger M."/>
            <person name="Schaefer M."/>
            <person name="Mueller-Auer S."/>
            <person name="Gabel C."/>
            <person name="Fuchs M."/>
            <person name="Duesterhoeft A."/>
            <person name="Fritzc C."/>
            <person name="Holzer E."/>
            <person name="Moestl D."/>
            <person name="Hilbert H."/>
            <person name="Borzym K."/>
            <person name="Langer I."/>
            <person name="Beck A."/>
            <person name="Lehrach H."/>
            <person name="Reinhardt R."/>
            <person name="Pohl T.M."/>
            <person name="Eger P."/>
            <person name="Zimmermann W."/>
            <person name="Wedler H."/>
            <person name="Wambutt R."/>
            <person name="Purnelle B."/>
            <person name="Goffeau A."/>
            <person name="Cadieu E."/>
            <person name="Dreano S."/>
            <person name="Gloux S."/>
            <person name="Lelaure V."/>
            <person name="Mottier S."/>
            <person name="Galibert F."/>
            <person name="Aves S.J."/>
            <person name="Xiang Z."/>
            <person name="Hunt C."/>
            <person name="Moore K."/>
            <person name="Hurst S.M."/>
            <person name="Lucas M."/>
            <person name="Rochet M."/>
            <person name="Gaillardin C."/>
            <person name="Tallada V.A."/>
            <person name="Garzon A."/>
            <person name="Thode G."/>
            <person name="Daga R.R."/>
            <person name="Cruzado L."/>
            <person name="Jimenez J."/>
            <person name="Sanchez M."/>
            <person name="del Rey F."/>
            <person name="Benito J."/>
            <person name="Dominguez A."/>
            <person name="Revuelta J.L."/>
            <person name="Moreno S."/>
            <person name="Armstrong J."/>
            <person name="Forsburg S.L."/>
            <person name="Cerutti L."/>
            <person name="Lowe T."/>
            <person name="McCombie W.R."/>
            <person name="Paulsen I."/>
            <person name="Potashkin J."/>
            <person name="Shpakovski G.V."/>
            <person name="Ussery D."/>
            <person name="Barrell B.G."/>
            <person name="Nurse P."/>
        </authorList>
    </citation>
    <scope>NUCLEOTIDE SEQUENCE [LARGE SCALE GENOMIC DNA]</scope>
    <source>
        <strain>972 / ATCC 24843</strain>
    </source>
</reference>
<reference key="3">
    <citation type="journal article" date="2011" name="Science">
        <title>Comparative functional genomics of the fission yeasts.</title>
        <authorList>
            <person name="Rhind N."/>
            <person name="Chen Z."/>
            <person name="Yassour M."/>
            <person name="Thompson D.A."/>
            <person name="Haas B.J."/>
            <person name="Habib N."/>
            <person name="Wapinski I."/>
            <person name="Roy S."/>
            <person name="Lin M.F."/>
            <person name="Heiman D.I."/>
            <person name="Young S.K."/>
            <person name="Furuya K."/>
            <person name="Guo Y."/>
            <person name="Pidoux A."/>
            <person name="Chen H.M."/>
            <person name="Robbertse B."/>
            <person name="Goldberg J.M."/>
            <person name="Aoki K."/>
            <person name="Bayne E.H."/>
            <person name="Berlin A.M."/>
            <person name="Desjardins C.A."/>
            <person name="Dobbs E."/>
            <person name="Dukaj L."/>
            <person name="Fan L."/>
            <person name="FitzGerald M.G."/>
            <person name="French C."/>
            <person name="Gujja S."/>
            <person name="Hansen K."/>
            <person name="Keifenheim D."/>
            <person name="Levin J.Z."/>
            <person name="Mosher R.A."/>
            <person name="Mueller C.A."/>
            <person name="Pfiffner J."/>
            <person name="Priest M."/>
            <person name="Russ C."/>
            <person name="Smialowska A."/>
            <person name="Swoboda P."/>
            <person name="Sykes S.M."/>
            <person name="Vaughn M."/>
            <person name="Vengrova S."/>
            <person name="Yoder R."/>
            <person name="Zeng Q."/>
            <person name="Allshire R."/>
            <person name="Baulcombe D."/>
            <person name="Birren B.W."/>
            <person name="Brown W."/>
            <person name="Ekwall K."/>
            <person name="Kellis M."/>
            <person name="Leatherwood J."/>
            <person name="Levin H."/>
            <person name="Margalit H."/>
            <person name="Martienssen R."/>
            <person name="Nieduszynski C.A."/>
            <person name="Spatafora J.W."/>
            <person name="Friedman N."/>
            <person name="Dalgaard J.Z."/>
            <person name="Baumann P."/>
            <person name="Niki H."/>
            <person name="Regev A."/>
            <person name="Nusbaum C."/>
        </authorList>
    </citation>
    <scope>REVISION OF GENE MODEL</scope>
</reference>
<reference key="4">
    <citation type="journal article" date="2005" name="Curr. Biol.">
        <title>A large-scale screen in S. pombe identifies seven novel genes required for critical meiotic events.</title>
        <authorList>
            <person name="Martin-Castellanos C."/>
            <person name="Blanco M."/>
            <person name="Rozalen A.E."/>
            <person name="Perez-Hidalgo L."/>
            <person name="Garcia A.I."/>
            <person name="Conde F."/>
            <person name="Mata J."/>
            <person name="Ellermeier C."/>
            <person name="Davis L."/>
            <person name="San-Segundo P."/>
            <person name="Smith G.R."/>
            <person name="Moreno S."/>
        </authorList>
    </citation>
    <scope>FUNCTION IN MEIOSIS</scope>
</reference>
<reference key="5">
    <citation type="journal article" date="2006" name="Nat. Biotechnol.">
        <title>ORFeome cloning and global analysis of protein localization in the fission yeast Schizosaccharomyces pombe.</title>
        <authorList>
            <person name="Matsuyama A."/>
            <person name="Arai R."/>
            <person name="Yashiroda Y."/>
            <person name="Shirai A."/>
            <person name="Kamata A."/>
            <person name="Sekido S."/>
            <person name="Kobayashi Y."/>
            <person name="Hashimoto A."/>
            <person name="Hamamoto M."/>
            <person name="Hiraoka Y."/>
            <person name="Horinouchi S."/>
            <person name="Yoshida M."/>
        </authorList>
    </citation>
    <scope>SUBCELLULAR LOCATION [LARGE SCALE ANALYSIS]</scope>
</reference>
<reference key="6">
    <citation type="journal article" date="2008" name="J. Proteome Res.">
        <title>Phosphoproteome analysis of fission yeast.</title>
        <authorList>
            <person name="Wilson-Grady J.T."/>
            <person name="Villen J."/>
            <person name="Gygi S.P."/>
        </authorList>
    </citation>
    <scope>PHOSPHORYLATION [LARGE SCALE ANALYSIS] AT SER-152</scope>
    <scope>IDENTIFICATION BY MASS SPECTROMETRY</scope>
</reference>
<dbReference type="EMBL" id="AY007252">
    <property type="protein sequence ID" value="AAG02568.1"/>
    <property type="molecule type" value="mRNA"/>
</dbReference>
<dbReference type="EMBL" id="CU329671">
    <property type="protein sequence ID" value="CAA22531.2"/>
    <property type="molecule type" value="Genomic_DNA"/>
</dbReference>
<dbReference type="PIR" id="T40623">
    <property type="entry name" value="T40623"/>
</dbReference>
<dbReference type="RefSeq" id="NP_595090.2">
    <property type="nucleotide sequence ID" value="NM_001020997.2"/>
</dbReference>
<dbReference type="SMR" id="Q9HEQ9"/>
<dbReference type="BioGRID" id="277577">
    <property type="interactions" value="88"/>
</dbReference>
<dbReference type="FunCoup" id="Q9HEQ9">
    <property type="interactions" value="23"/>
</dbReference>
<dbReference type="STRING" id="284812.Q9HEQ9"/>
<dbReference type="iPTMnet" id="Q9HEQ9"/>
<dbReference type="PaxDb" id="4896-SPBC660.11.1"/>
<dbReference type="EnsemblFungi" id="SPBC660.11.1">
    <property type="protein sequence ID" value="SPBC660.11.1:pep"/>
    <property type="gene ID" value="SPBC660.11"/>
</dbReference>
<dbReference type="GeneID" id="2541062"/>
<dbReference type="KEGG" id="spo:2541062"/>
<dbReference type="PomBase" id="SPBC660.11">
    <property type="gene designation" value="tcg1"/>
</dbReference>
<dbReference type="VEuPathDB" id="FungiDB:SPBC660.11"/>
<dbReference type="eggNOG" id="KOG0118">
    <property type="taxonomic scope" value="Eukaryota"/>
</dbReference>
<dbReference type="HOGENOM" id="CLU_794914_0_0_1"/>
<dbReference type="InParanoid" id="Q9HEQ9"/>
<dbReference type="OMA" id="KRHLGFA"/>
<dbReference type="Reactome" id="R-SPO-72163">
    <property type="pathway name" value="mRNA Splicing - Major Pathway"/>
</dbReference>
<dbReference type="Reactome" id="R-SPO-72203">
    <property type="pathway name" value="Processing of Capped Intron-Containing Pre-mRNA"/>
</dbReference>
<dbReference type="PRO" id="PR:Q9HEQ9"/>
<dbReference type="Proteomes" id="UP000002485">
    <property type="component" value="Chromosome II"/>
</dbReference>
<dbReference type="GO" id="GO:0140445">
    <property type="term" value="C:chromosome, telomeric repeat region"/>
    <property type="evidence" value="ECO:0000305"/>
    <property type="project" value="PomBase"/>
</dbReference>
<dbReference type="GO" id="GO:0005829">
    <property type="term" value="C:cytosol"/>
    <property type="evidence" value="ECO:0007005"/>
    <property type="project" value="PomBase"/>
</dbReference>
<dbReference type="GO" id="GO:0016607">
    <property type="term" value="C:nuclear speck"/>
    <property type="evidence" value="ECO:0000318"/>
    <property type="project" value="GO_Central"/>
</dbReference>
<dbReference type="GO" id="GO:0005634">
    <property type="term" value="C:nucleus"/>
    <property type="evidence" value="ECO:0000303"/>
    <property type="project" value="PomBase"/>
</dbReference>
<dbReference type="GO" id="GO:0003723">
    <property type="term" value="F:RNA binding"/>
    <property type="evidence" value="ECO:0000318"/>
    <property type="project" value="GO_Central"/>
</dbReference>
<dbReference type="GO" id="GO:0043047">
    <property type="term" value="F:single-stranded telomeric DNA binding"/>
    <property type="evidence" value="ECO:0000314"/>
    <property type="project" value="PomBase"/>
</dbReference>
<dbReference type="GO" id="GO:0051321">
    <property type="term" value="P:meiotic cell cycle"/>
    <property type="evidence" value="ECO:0007669"/>
    <property type="project" value="UniProtKB-KW"/>
</dbReference>
<dbReference type="GO" id="GO:0045292">
    <property type="term" value="P:mRNA cis splicing, via spliceosome"/>
    <property type="evidence" value="ECO:0000318"/>
    <property type="project" value="GO_Central"/>
</dbReference>
<dbReference type="GO" id="GO:0000723">
    <property type="term" value="P:telomere maintenance"/>
    <property type="evidence" value="ECO:0000304"/>
    <property type="project" value="PomBase"/>
</dbReference>
<dbReference type="CDD" id="cd00590">
    <property type="entry name" value="RRM_SF"/>
    <property type="match status" value="2"/>
</dbReference>
<dbReference type="FunFam" id="3.30.70.330:FF:001113">
    <property type="entry name" value="RNP domain protein"/>
    <property type="match status" value="1"/>
</dbReference>
<dbReference type="Gene3D" id="3.30.70.330">
    <property type="match status" value="2"/>
</dbReference>
<dbReference type="InterPro" id="IPR012677">
    <property type="entry name" value="Nucleotide-bd_a/b_plait_sf"/>
</dbReference>
<dbReference type="InterPro" id="IPR035979">
    <property type="entry name" value="RBD_domain_sf"/>
</dbReference>
<dbReference type="InterPro" id="IPR000504">
    <property type="entry name" value="RRM_dom"/>
</dbReference>
<dbReference type="InterPro" id="IPR051945">
    <property type="entry name" value="RRM_MRD1_RNA_proc_ribogen"/>
</dbReference>
<dbReference type="PANTHER" id="PTHR48039">
    <property type="entry name" value="RNA-BINDING MOTIF PROTEIN 14B"/>
    <property type="match status" value="1"/>
</dbReference>
<dbReference type="PANTHER" id="PTHR48039:SF5">
    <property type="entry name" value="RNA-BINDING PROTEIN 28"/>
    <property type="match status" value="1"/>
</dbReference>
<dbReference type="Pfam" id="PF00076">
    <property type="entry name" value="RRM_1"/>
    <property type="match status" value="2"/>
</dbReference>
<dbReference type="SMART" id="SM00360">
    <property type="entry name" value="RRM"/>
    <property type="match status" value="2"/>
</dbReference>
<dbReference type="SUPFAM" id="SSF54928">
    <property type="entry name" value="RNA-binding domain, RBD"/>
    <property type="match status" value="1"/>
</dbReference>
<dbReference type="PROSITE" id="PS50102">
    <property type="entry name" value="RRM"/>
    <property type="match status" value="2"/>
</dbReference>
<organism>
    <name type="scientific">Schizosaccharomyces pombe (strain 972 / ATCC 24843)</name>
    <name type="common">Fission yeast</name>
    <dbReference type="NCBI Taxonomy" id="284812"/>
    <lineage>
        <taxon>Eukaryota</taxon>
        <taxon>Fungi</taxon>
        <taxon>Dikarya</taxon>
        <taxon>Ascomycota</taxon>
        <taxon>Taphrinomycotina</taxon>
        <taxon>Schizosaccharomycetes</taxon>
        <taxon>Schizosaccharomycetales</taxon>
        <taxon>Schizosaccharomycetaceae</taxon>
        <taxon>Schizosaccharomyces</taxon>
    </lineage>
</organism>
<gene>
    <name type="primary">tcg1</name>
    <name type="synonym">mug187</name>
    <name type="ORF">SPBC660.11</name>
</gene>
<proteinExistence type="evidence at protein level"/>
<evidence type="ECO:0000255" key="1">
    <source>
        <dbReference type="PROSITE-ProRule" id="PRU00176"/>
    </source>
</evidence>
<evidence type="ECO:0000256" key="2">
    <source>
        <dbReference type="SAM" id="MobiDB-lite"/>
    </source>
</evidence>
<evidence type="ECO:0000269" key="3">
    <source>
    </source>
</evidence>
<evidence type="ECO:0000269" key="4">
    <source>
    </source>
</evidence>
<evidence type="ECO:0000269" key="5">
    <source>
    </source>
</evidence>
<feature type="chain" id="PRO_0000081971" description="Single-stranded TG1-3 DNA-binding protein">
    <location>
        <begin position="1"/>
        <end position="349"/>
    </location>
</feature>
<feature type="domain" description="RRM 1" evidence="1">
    <location>
        <begin position="45"/>
        <end position="127"/>
    </location>
</feature>
<feature type="domain" description="RRM 2" evidence="1">
    <location>
        <begin position="206"/>
        <end position="296"/>
    </location>
</feature>
<feature type="region of interest" description="Disordered" evidence="2">
    <location>
        <begin position="121"/>
        <end position="208"/>
    </location>
</feature>
<feature type="region of interest" description="Disordered" evidence="2">
    <location>
        <begin position="298"/>
        <end position="349"/>
    </location>
</feature>
<feature type="compositionally biased region" description="Polar residues" evidence="2">
    <location>
        <begin position="168"/>
        <end position="179"/>
    </location>
</feature>
<feature type="compositionally biased region" description="Basic and acidic residues" evidence="2">
    <location>
        <begin position="181"/>
        <end position="191"/>
    </location>
</feature>
<feature type="compositionally biased region" description="Basic and acidic residues" evidence="2">
    <location>
        <begin position="298"/>
        <end position="310"/>
    </location>
</feature>
<feature type="compositionally biased region" description="Basic and acidic residues" evidence="2">
    <location>
        <begin position="327"/>
        <end position="340"/>
    </location>
</feature>
<feature type="modified residue" description="Phosphoserine" evidence="5">
    <location>
        <position position="152"/>
    </location>
</feature>
<sequence length="349" mass="38003">MMSAEETVTQNAPNTVQDQVEASVDAAVHASAEQSNTPAQQADDFRVFVGRLSTSTKKSEIRSLFETVGTVRKVTIPFRRVRRGTRLVPSGIAFVTFNNQEDVDKAIETLNGKTLDDREIVVQKARPVQEQPIKDRKKSKNKNGEEPETSTSVENAESAKGSSDENEANTATAPSSNEANGVDKKQNEIKGKGGSGKNKAKPLPPNSIYVSGLSVTLTNEGLKEMFDAYNPTRARIAVRSLPPYIIRRIKLRGEQRRGRGFGFVSFANAEDQSRAIEEMNGKQVGDLTLVVKSAVFREDKQNDENEKNENEPIEASESAPTNVSDSTEPKASEVDSEEKSGVTASAITA</sequence>